<keyword id="KW-1185">Reference proteome</keyword>
<keyword id="KW-0732">Signal</keyword>
<keyword id="KW-0813">Transport</keyword>
<reference key="1">
    <citation type="journal article" date="1995" name="DNA Res.">
        <title>Sequence analysis of the genome of the unicellular cyanobacterium Synechocystis sp. strain PCC6803. I. Sequence features in the 1 Mb region from map positions 64% to 92% of the genome.</title>
        <authorList>
            <person name="Kaneko T."/>
            <person name="Tanaka A."/>
            <person name="Sato S."/>
            <person name="Kotani H."/>
            <person name="Sazuka T."/>
            <person name="Miyajima N."/>
            <person name="Sugiura M."/>
            <person name="Tabata S."/>
        </authorList>
    </citation>
    <scope>NUCLEOTIDE SEQUENCE [LARGE SCALE GENOMIC DNA]</scope>
    <source>
        <strain>ATCC 27184 / PCC 6803 / N-1</strain>
    </source>
</reference>
<reference key="2">
    <citation type="journal article" date="1996" name="DNA Res.">
        <title>Sequence analysis of the genome of the unicellular cyanobacterium Synechocystis sp. strain PCC6803. II. Sequence determination of the entire genome and assignment of potential protein-coding regions.</title>
        <authorList>
            <person name="Kaneko T."/>
            <person name="Sato S."/>
            <person name="Kotani H."/>
            <person name="Tanaka A."/>
            <person name="Asamizu E."/>
            <person name="Nakamura Y."/>
            <person name="Miyajima N."/>
            <person name="Hirosawa M."/>
            <person name="Sugiura M."/>
            <person name="Sasamoto S."/>
            <person name="Kimura T."/>
            <person name="Hosouchi T."/>
            <person name="Matsuno A."/>
            <person name="Muraki A."/>
            <person name="Nakazaki N."/>
            <person name="Naruo K."/>
            <person name="Okumura S."/>
            <person name="Shimpo S."/>
            <person name="Takeuchi C."/>
            <person name="Wada T."/>
            <person name="Watanabe A."/>
            <person name="Yamada M."/>
            <person name="Yasuda M."/>
            <person name="Tabata S."/>
        </authorList>
    </citation>
    <scope>NUCLEOTIDE SEQUENCE [LARGE SCALE GENOMIC DNA]</scope>
    <source>
        <strain>ATCC 27184 / PCC 6803 / Kazusa</strain>
    </source>
</reference>
<proteinExistence type="inferred from homology"/>
<accession>Q55200</accession>
<dbReference type="EMBL" id="BA000022">
    <property type="protein sequence ID" value="BAA10342.1"/>
    <property type="molecule type" value="Genomic_DNA"/>
</dbReference>
<dbReference type="PIR" id="S74424">
    <property type="entry name" value="S74424"/>
</dbReference>
<dbReference type="SMR" id="Q55200"/>
<dbReference type="STRING" id="1148.gene:10499842"/>
<dbReference type="PaxDb" id="1148-1001198"/>
<dbReference type="EnsemblBacteria" id="BAA10342">
    <property type="protein sequence ID" value="BAA10342"/>
    <property type="gene ID" value="BAA10342"/>
</dbReference>
<dbReference type="KEGG" id="syn:sll0679"/>
<dbReference type="eggNOG" id="COG0226">
    <property type="taxonomic scope" value="Bacteria"/>
</dbReference>
<dbReference type="InParanoid" id="Q55200"/>
<dbReference type="PhylomeDB" id="Q55200"/>
<dbReference type="Proteomes" id="UP000001425">
    <property type="component" value="Chromosome"/>
</dbReference>
<dbReference type="GO" id="GO:0042301">
    <property type="term" value="F:phosphate ion binding"/>
    <property type="evidence" value="ECO:0007669"/>
    <property type="project" value="InterPro"/>
</dbReference>
<dbReference type="CDD" id="cd13654">
    <property type="entry name" value="PBP2_phosphate_like_2"/>
    <property type="match status" value="1"/>
</dbReference>
<dbReference type="FunFam" id="3.40.190.10:FF:000156">
    <property type="entry name" value="Phosphate ABC transporter, phosphate-binding protein"/>
    <property type="match status" value="1"/>
</dbReference>
<dbReference type="Gene3D" id="3.40.190.10">
    <property type="entry name" value="Periplasmic binding protein-like II"/>
    <property type="match status" value="2"/>
</dbReference>
<dbReference type="InterPro" id="IPR024370">
    <property type="entry name" value="PBP_domain"/>
</dbReference>
<dbReference type="InterPro" id="IPR011862">
    <property type="entry name" value="Phos-bd"/>
</dbReference>
<dbReference type="InterPro" id="IPR050811">
    <property type="entry name" value="Phosphate_ABC_transporter"/>
</dbReference>
<dbReference type="NCBIfam" id="TIGR02136">
    <property type="entry name" value="ptsS_2"/>
    <property type="match status" value="1"/>
</dbReference>
<dbReference type="PANTHER" id="PTHR30570">
    <property type="entry name" value="PERIPLASMIC PHOSPHATE BINDING COMPONENT OF PHOSPHATE ABC TRANSPORTER"/>
    <property type="match status" value="1"/>
</dbReference>
<dbReference type="PANTHER" id="PTHR30570:SF1">
    <property type="entry name" value="PHOSPHATE-BINDING PROTEIN PSTS"/>
    <property type="match status" value="1"/>
</dbReference>
<dbReference type="Pfam" id="PF12849">
    <property type="entry name" value="PBP_like_2"/>
    <property type="match status" value="1"/>
</dbReference>
<dbReference type="SUPFAM" id="SSF53850">
    <property type="entry name" value="Periplasmic binding protein-like II"/>
    <property type="match status" value="1"/>
</dbReference>
<dbReference type="PROSITE" id="PS51257">
    <property type="entry name" value="PROKAR_LIPOPROTEIN"/>
    <property type="match status" value="1"/>
</dbReference>
<gene>
    <name type="primary">sphX</name>
    <name type="ordered locus">sll0679</name>
</gene>
<comment type="function">
    <text evidence="1">May be involved in the system for phosphate transport across the cytoplasmic membrane.</text>
</comment>
<comment type="similarity">
    <text evidence="3">Belongs to the PstS family.</text>
</comment>
<sequence length="336" mass="36779">MFDLSRLSRGIVPMALLLLGISACTPSQTSQSIAINGSSTVYPITEAIVADFSGGKKGVDIDVEFSGTGGGFKLFCEGKTDIADASRPINKQEMKLCNDNQVRYVELPIAFDAITVVSNPKNDWLKSLTVEELKRIWEPAAEKTLTRWNQVRPEFPDQPINLYSPGEDSGTFDYFTEAIVGQAGASRLDTLKSEDDEILVQGVVQDLYSLGYFGFAYYEGRIADLKAIGVDNGRGPVLPSRETVEKSEYQPLSRPLFIYVNATKAQDNPALREFVDFYLANASATATKVGYIPLPEEAYNLGKISFNKGEVGTVFGGESVMDLTIGELLKKQASFE</sequence>
<organism>
    <name type="scientific">Synechocystis sp. (strain ATCC 27184 / PCC 6803 / Kazusa)</name>
    <dbReference type="NCBI Taxonomy" id="1111708"/>
    <lineage>
        <taxon>Bacteria</taxon>
        <taxon>Bacillati</taxon>
        <taxon>Cyanobacteriota</taxon>
        <taxon>Cyanophyceae</taxon>
        <taxon>Synechococcales</taxon>
        <taxon>Merismopediaceae</taxon>
        <taxon>Synechocystis</taxon>
    </lineage>
</organism>
<name>SPHX_SYNY3</name>
<evidence type="ECO:0000250" key="1"/>
<evidence type="ECO:0000255" key="2">
    <source>
        <dbReference type="PROSITE-ProRule" id="PRU00303"/>
    </source>
</evidence>
<evidence type="ECO:0000305" key="3"/>
<feature type="signal peptide" evidence="2">
    <location>
        <begin position="1"/>
        <end position="27"/>
    </location>
</feature>
<feature type="chain" id="PRO_0000031861" description="Protein SphX">
    <location>
        <begin position="28"/>
        <end position="336"/>
    </location>
</feature>
<protein>
    <recommendedName>
        <fullName>Protein SphX</fullName>
    </recommendedName>
</protein>